<reference key="1">
    <citation type="submission" date="2006-12" db="EMBL/GenBank/DDBJ databases">
        <title>Complete sequence of Halorhodospira halophila SL1.</title>
        <authorList>
            <consortium name="US DOE Joint Genome Institute"/>
            <person name="Copeland A."/>
            <person name="Lucas S."/>
            <person name="Lapidus A."/>
            <person name="Barry K."/>
            <person name="Detter J.C."/>
            <person name="Glavina del Rio T."/>
            <person name="Hammon N."/>
            <person name="Israni S."/>
            <person name="Dalin E."/>
            <person name="Tice H."/>
            <person name="Pitluck S."/>
            <person name="Saunders E."/>
            <person name="Brettin T."/>
            <person name="Bruce D."/>
            <person name="Han C."/>
            <person name="Tapia R."/>
            <person name="Schmutz J."/>
            <person name="Larimer F."/>
            <person name="Land M."/>
            <person name="Hauser L."/>
            <person name="Kyrpides N."/>
            <person name="Mikhailova N."/>
            <person name="Hoff W."/>
            <person name="Richardson P."/>
        </authorList>
    </citation>
    <scope>NUCLEOTIDE SEQUENCE [LARGE SCALE GENOMIC DNA]</scope>
    <source>
        <strain>DSM 244 / SL1</strain>
    </source>
</reference>
<accession>A1WUU4</accession>
<feature type="chain" id="PRO_0000305462" description="Pantothenate synthetase">
    <location>
        <begin position="1"/>
        <end position="285"/>
    </location>
</feature>
<feature type="active site" description="Proton donor" evidence="1">
    <location>
        <position position="37"/>
    </location>
</feature>
<feature type="binding site" evidence="1">
    <location>
        <begin position="30"/>
        <end position="37"/>
    </location>
    <ligand>
        <name>ATP</name>
        <dbReference type="ChEBI" id="CHEBI:30616"/>
    </ligand>
</feature>
<feature type="binding site" evidence="1">
    <location>
        <position position="61"/>
    </location>
    <ligand>
        <name>(R)-pantoate</name>
        <dbReference type="ChEBI" id="CHEBI:15980"/>
    </ligand>
</feature>
<feature type="binding site" evidence="1">
    <location>
        <position position="61"/>
    </location>
    <ligand>
        <name>beta-alanine</name>
        <dbReference type="ChEBI" id="CHEBI:57966"/>
    </ligand>
</feature>
<feature type="binding site" evidence="1">
    <location>
        <begin position="149"/>
        <end position="152"/>
    </location>
    <ligand>
        <name>ATP</name>
        <dbReference type="ChEBI" id="CHEBI:30616"/>
    </ligand>
</feature>
<feature type="binding site" evidence="1">
    <location>
        <position position="155"/>
    </location>
    <ligand>
        <name>(R)-pantoate</name>
        <dbReference type="ChEBI" id="CHEBI:15980"/>
    </ligand>
</feature>
<feature type="binding site" evidence="1">
    <location>
        <position position="178"/>
    </location>
    <ligand>
        <name>ATP</name>
        <dbReference type="ChEBI" id="CHEBI:30616"/>
    </ligand>
</feature>
<feature type="binding site" evidence="1">
    <location>
        <begin position="186"/>
        <end position="189"/>
    </location>
    <ligand>
        <name>ATP</name>
        <dbReference type="ChEBI" id="CHEBI:30616"/>
    </ligand>
</feature>
<comment type="function">
    <text evidence="1">Catalyzes the condensation of pantoate with beta-alanine in an ATP-dependent reaction via a pantoyl-adenylate intermediate.</text>
</comment>
<comment type="catalytic activity">
    <reaction evidence="1">
        <text>(R)-pantoate + beta-alanine + ATP = (R)-pantothenate + AMP + diphosphate + H(+)</text>
        <dbReference type="Rhea" id="RHEA:10912"/>
        <dbReference type="ChEBI" id="CHEBI:15378"/>
        <dbReference type="ChEBI" id="CHEBI:15980"/>
        <dbReference type="ChEBI" id="CHEBI:29032"/>
        <dbReference type="ChEBI" id="CHEBI:30616"/>
        <dbReference type="ChEBI" id="CHEBI:33019"/>
        <dbReference type="ChEBI" id="CHEBI:57966"/>
        <dbReference type="ChEBI" id="CHEBI:456215"/>
        <dbReference type="EC" id="6.3.2.1"/>
    </reaction>
</comment>
<comment type="pathway">
    <text evidence="1">Cofactor biosynthesis; (R)-pantothenate biosynthesis; (R)-pantothenate from (R)-pantoate and beta-alanine: step 1/1.</text>
</comment>
<comment type="subunit">
    <text evidence="1">Homodimer.</text>
</comment>
<comment type="subcellular location">
    <subcellularLocation>
        <location evidence="1">Cytoplasm</location>
    </subcellularLocation>
</comment>
<comment type="miscellaneous">
    <text evidence="1">The reaction proceeds by a bi uni uni bi ping pong mechanism.</text>
</comment>
<comment type="similarity">
    <text evidence="1">Belongs to the pantothenate synthetase family.</text>
</comment>
<sequence length="285" mass="31430">MRQVTERNAMRELSRAWRARGERIGLVPTMGNLHRGHLELVERLARRVDRLVVSIFVNPLQFGPGEDYDAYPRTLEADLNALEGRGVDAVFAPNAREMYPGVEPPWTGVDVPALTQTLCGAARPGHFAGVAVVVIKLLNIVEPDVAAFGRKDYQQLQVIRRVVGDLDLSVEIVEVPIVREADGLALSSRNGYMDGEQRRRAPALYATLCEVAAALEAGRRDWSQLEAQACRRLEAAGFDAAEYVAVRRCDDLAEPQGDEPRLVCLGAARLGAARLIDNVEARLKR</sequence>
<organism>
    <name type="scientific">Halorhodospira halophila (strain DSM 244 / SL1)</name>
    <name type="common">Ectothiorhodospira halophila (strain DSM 244 / SL1)</name>
    <dbReference type="NCBI Taxonomy" id="349124"/>
    <lineage>
        <taxon>Bacteria</taxon>
        <taxon>Pseudomonadati</taxon>
        <taxon>Pseudomonadota</taxon>
        <taxon>Gammaproteobacteria</taxon>
        <taxon>Chromatiales</taxon>
        <taxon>Ectothiorhodospiraceae</taxon>
        <taxon>Halorhodospira</taxon>
    </lineage>
</organism>
<evidence type="ECO:0000255" key="1">
    <source>
        <dbReference type="HAMAP-Rule" id="MF_00158"/>
    </source>
</evidence>
<protein>
    <recommendedName>
        <fullName evidence="1">Pantothenate synthetase</fullName>
        <shortName evidence="1">PS</shortName>
        <ecNumber evidence="1">6.3.2.1</ecNumber>
    </recommendedName>
    <alternativeName>
        <fullName evidence="1">Pantoate--beta-alanine ligase</fullName>
    </alternativeName>
    <alternativeName>
        <fullName evidence="1">Pantoate-activating enzyme</fullName>
    </alternativeName>
</protein>
<gene>
    <name evidence="1" type="primary">panC</name>
    <name type="ordered locus">Hhal_0674</name>
</gene>
<dbReference type="EC" id="6.3.2.1" evidence="1"/>
<dbReference type="EMBL" id="CP000544">
    <property type="protein sequence ID" value="ABM61456.1"/>
    <property type="molecule type" value="Genomic_DNA"/>
</dbReference>
<dbReference type="RefSeq" id="WP_011813479.1">
    <property type="nucleotide sequence ID" value="NC_008789.1"/>
</dbReference>
<dbReference type="SMR" id="A1WUU4"/>
<dbReference type="STRING" id="349124.Hhal_0674"/>
<dbReference type="KEGG" id="hha:Hhal_0674"/>
<dbReference type="eggNOG" id="COG0414">
    <property type="taxonomic scope" value="Bacteria"/>
</dbReference>
<dbReference type="HOGENOM" id="CLU_047148_0_0_6"/>
<dbReference type="OrthoDB" id="9773087at2"/>
<dbReference type="UniPathway" id="UPA00028">
    <property type="reaction ID" value="UER00005"/>
</dbReference>
<dbReference type="Proteomes" id="UP000000647">
    <property type="component" value="Chromosome"/>
</dbReference>
<dbReference type="GO" id="GO:0005829">
    <property type="term" value="C:cytosol"/>
    <property type="evidence" value="ECO:0007669"/>
    <property type="project" value="TreeGrafter"/>
</dbReference>
<dbReference type="GO" id="GO:0005524">
    <property type="term" value="F:ATP binding"/>
    <property type="evidence" value="ECO:0007669"/>
    <property type="project" value="UniProtKB-KW"/>
</dbReference>
<dbReference type="GO" id="GO:0004592">
    <property type="term" value="F:pantoate-beta-alanine ligase activity"/>
    <property type="evidence" value="ECO:0007669"/>
    <property type="project" value="UniProtKB-UniRule"/>
</dbReference>
<dbReference type="GO" id="GO:0015940">
    <property type="term" value="P:pantothenate biosynthetic process"/>
    <property type="evidence" value="ECO:0007669"/>
    <property type="project" value="UniProtKB-UniRule"/>
</dbReference>
<dbReference type="CDD" id="cd00560">
    <property type="entry name" value="PanC"/>
    <property type="match status" value="1"/>
</dbReference>
<dbReference type="FunFam" id="3.40.50.620:FF:000013">
    <property type="entry name" value="Pantothenate synthetase"/>
    <property type="match status" value="1"/>
</dbReference>
<dbReference type="Gene3D" id="3.40.50.620">
    <property type="entry name" value="HUPs"/>
    <property type="match status" value="1"/>
</dbReference>
<dbReference type="Gene3D" id="3.30.1300.10">
    <property type="entry name" value="Pantoate-beta-alanine ligase, C-terminal domain"/>
    <property type="match status" value="1"/>
</dbReference>
<dbReference type="HAMAP" id="MF_00158">
    <property type="entry name" value="PanC"/>
    <property type="match status" value="1"/>
</dbReference>
<dbReference type="InterPro" id="IPR004821">
    <property type="entry name" value="Cyt_trans-like"/>
</dbReference>
<dbReference type="InterPro" id="IPR003721">
    <property type="entry name" value="Pantoate_ligase"/>
</dbReference>
<dbReference type="InterPro" id="IPR042176">
    <property type="entry name" value="Pantoate_ligase_C"/>
</dbReference>
<dbReference type="InterPro" id="IPR014729">
    <property type="entry name" value="Rossmann-like_a/b/a_fold"/>
</dbReference>
<dbReference type="NCBIfam" id="TIGR00125">
    <property type="entry name" value="cyt_tran_rel"/>
    <property type="match status" value="1"/>
</dbReference>
<dbReference type="NCBIfam" id="TIGR00018">
    <property type="entry name" value="panC"/>
    <property type="match status" value="1"/>
</dbReference>
<dbReference type="PANTHER" id="PTHR21299">
    <property type="entry name" value="CYTIDYLATE KINASE/PANTOATE-BETA-ALANINE LIGASE"/>
    <property type="match status" value="1"/>
</dbReference>
<dbReference type="PANTHER" id="PTHR21299:SF1">
    <property type="entry name" value="PANTOATE--BETA-ALANINE LIGASE"/>
    <property type="match status" value="1"/>
</dbReference>
<dbReference type="Pfam" id="PF02569">
    <property type="entry name" value="Pantoate_ligase"/>
    <property type="match status" value="1"/>
</dbReference>
<dbReference type="SUPFAM" id="SSF52374">
    <property type="entry name" value="Nucleotidylyl transferase"/>
    <property type="match status" value="1"/>
</dbReference>
<name>PANC_HALHL</name>
<proteinExistence type="inferred from homology"/>
<keyword id="KW-0067">ATP-binding</keyword>
<keyword id="KW-0963">Cytoplasm</keyword>
<keyword id="KW-0436">Ligase</keyword>
<keyword id="KW-0547">Nucleotide-binding</keyword>
<keyword id="KW-0566">Pantothenate biosynthesis</keyword>
<keyword id="KW-1185">Reference proteome</keyword>